<organism>
    <name type="scientific">Mus musculus</name>
    <name type="common">Mouse</name>
    <dbReference type="NCBI Taxonomy" id="10090"/>
    <lineage>
        <taxon>Eukaryota</taxon>
        <taxon>Metazoa</taxon>
        <taxon>Chordata</taxon>
        <taxon>Craniata</taxon>
        <taxon>Vertebrata</taxon>
        <taxon>Euteleostomi</taxon>
        <taxon>Mammalia</taxon>
        <taxon>Eutheria</taxon>
        <taxon>Euarchontoglires</taxon>
        <taxon>Glires</taxon>
        <taxon>Rodentia</taxon>
        <taxon>Myomorpha</taxon>
        <taxon>Muroidea</taxon>
        <taxon>Muridae</taxon>
        <taxon>Murinae</taxon>
        <taxon>Mus</taxon>
        <taxon>Mus</taxon>
    </lineage>
</organism>
<evidence type="ECO:0000250" key="1">
    <source>
        <dbReference type="UniProtKB" id="Q8NDX6"/>
    </source>
</evidence>
<evidence type="ECO:0000255" key="2">
    <source>
        <dbReference type="PROSITE-ProRule" id="PRU00042"/>
    </source>
</evidence>
<evidence type="ECO:0000256" key="3">
    <source>
        <dbReference type="SAM" id="MobiDB-lite"/>
    </source>
</evidence>
<evidence type="ECO:0000303" key="4">
    <source>
    </source>
</evidence>
<evidence type="ECO:0000303" key="5">
    <source>
    </source>
</evidence>
<evidence type="ECO:0000305" key="6"/>
<evidence type="ECO:0007744" key="7">
    <source>
    </source>
</evidence>
<feature type="chain" id="PRO_0000251402" description="Zinc finger protein 740">
    <location>
        <begin position="1"/>
        <end position="180"/>
    </location>
</feature>
<feature type="zinc finger region" description="C2H2-type 1" evidence="2">
    <location>
        <begin position="88"/>
        <end position="110"/>
    </location>
</feature>
<feature type="zinc finger region" description="C2H2-type 2" evidence="2">
    <location>
        <begin position="116"/>
        <end position="138"/>
    </location>
</feature>
<feature type="zinc finger region" description="C2H2-type 3; atypical" evidence="2">
    <location>
        <begin position="144"/>
        <end position="166"/>
    </location>
</feature>
<feature type="region of interest" description="Disordered" evidence="3">
    <location>
        <begin position="1"/>
        <end position="62"/>
    </location>
</feature>
<feature type="compositionally biased region" description="Polar residues" evidence="3">
    <location>
        <begin position="1"/>
        <end position="11"/>
    </location>
</feature>
<feature type="compositionally biased region" description="Basic and acidic residues" evidence="3">
    <location>
        <begin position="31"/>
        <end position="56"/>
    </location>
</feature>
<feature type="modified residue" description="Phosphoserine" evidence="7">
    <location>
        <position position="19"/>
    </location>
</feature>
<feature type="cross-link" description="Glycyl lysine isopeptide (Lys-Gly) (interchain with G-Cter in SUMO2)" evidence="1">
    <location>
        <position position="9"/>
    </location>
</feature>
<feature type="splice variant" id="VSP_020756" description="In isoform 3." evidence="4">
    <location>
        <begin position="1"/>
        <end position="63"/>
    </location>
</feature>
<feature type="splice variant" id="VSP_020757" description="In isoform 2." evidence="5">
    <location>
        <begin position="29"/>
        <end position="40"/>
    </location>
</feature>
<feature type="splice variant" id="VSP_020758" description="In isoform 3." evidence="4">
    <original>SKKTVKK</original>
    <variation>MPDCCPQ</variation>
    <location>
        <begin position="64"/>
        <end position="70"/>
    </location>
</feature>
<feature type="sequence conflict" description="In Ref. 1; BAE26025." evidence="6" ref="1">
    <original>S</original>
    <variation>T</variation>
    <location>
        <position position="8"/>
    </location>
</feature>
<feature type="sequence conflict" description="In Ref. 1; BAE26025." evidence="6" ref="1">
    <original>S</original>
    <variation>P</variation>
    <location>
        <position position="154"/>
    </location>
</feature>
<keyword id="KW-0025">Alternative splicing</keyword>
<keyword id="KW-1017">Isopeptide bond</keyword>
<keyword id="KW-0479">Metal-binding</keyword>
<keyword id="KW-0539">Nucleus</keyword>
<keyword id="KW-0597">Phosphoprotein</keyword>
<keyword id="KW-1185">Reference proteome</keyword>
<keyword id="KW-0677">Repeat</keyword>
<keyword id="KW-0804">Transcription</keyword>
<keyword id="KW-0805">Transcription regulation</keyword>
<keyword id="KW-0832">Ubl conjugation</keyword>
<keyword id="KW-0862">Zinc</keyword>
<keyword id="KW-0863">Zinc-finger</keyword>
<comment type="function">
    <text>May be involved in transcriptional regulation.</text>
</comment>
<comment type="subcellular location">
    <subcellularLocation>
        <location evidence="6">Nucleus</location>
    </subcellularLocation>
</comment>
<comment type="alternative products">
    <event type="alternative splicing"/>
    <isoform>
        <id>Q6NZQ6-1</id>
        <name>1</name>
        <sequence type="displayed"/>
    </isoform>
    <isoform>
        <id>Q6NZQ6-2</id>
        <name>2</name>
        <sequence type="described" ref="VSP_020757"/>
    </isoform>
    <isoform>
        <id>Q6NZQ6-3</id>
        <name>3</name>
        <sequence type="described" ref="VSP_020756 VSP_020758"/>
    </isoform>
</comment>
<comment type="similarity">
    <text evidence="6">Belongs to the krueppel C2H2-type zinc-finger protein family.</text>
</comment>
<accession>Q6NZQ6</accession>
<accession>Q3UMS3</accession>
<accession>Q8JZR3</accession>
<name>ZN740_MOUSE</name>
<reference key="1">
    <citation type="journal article" date="2005" name="Science">
        <title>The transcriptional landscape of the mammalian genome.</title>
        <authorList>
            <person name="Carninci P."/>
            <person name="Kasukawa T."/>
            <person name="Katayama S."/>
            <person name="Gough J."/>
            <person name="Frith M.C."/>
            <person name="Maeda N."/>
            <person name="Oyama R."/>
            <person name="Ravasi T."/>
            <person name="Lenhard B."/>
            <person name="Wells C."/>
            <person name="Kodzius R."/>
            <person name="Shimokawa K."/>
            <person name="Bajic V.B."/>
            <person name="Brenner S.E."/>
            <person name="Batalov S."/>
            <person name="Forrest A.R."/>
            <person name="Zavolan M."/>
            <person name="Davis M.J."/>
            <person name="Wilming L.G."/>
            <person name="Aidinis V."/>
            <person name="Allen J.E."/>
            <person name="Ambesi-Impiombato A."/>
            <person name="Apweiler R."/>
            <person name="Aturaliya R.N."/>
            <person name="Bailey T.L."/>
            <person name="Bansal M."/>
            <person name="Baxter L."/>
            <person name="Beisel K.W."/>
            <person name="Bersano T."/>
            <person name="Bono H."/>
            <person name="Chalk A.M."/>
            <person name="Chiu K.P."/>
            <person name="Choudhary V."/>
            <person name="Christoffels A."/>
            <person name="Clutterbuck D.R."/>
            <person name="Crowe M.L."/>
            <person name="Dalla E."/>
            <person name="Dalrymple B.P."/>
            <person name="de Bono B."/>
            <person name="Della Gatta G."/>
            <person name="di Bernardo D."/>
            <person name="Down T."/>
            <person name="Engstrom P."/>
            <person name="Fagiolini M."/>
            <person name="Faulkner G."/>
            <person name="Fletcher C.F."/>
            <person name="Fukushima T."/>
            <person name="Furuno M."/>
            <person name="Futaki S."/>
            <person name="Gariboldi M."/>
            <person name="Georgii-Hemming P."/>
            <person name="Gingeras T.R."/>
            <person name="Gojobori T."/>
            <person name="Green R.E."/>
            <person name="Gustincich S."/>
            <person name="Harbers M."/>
            <person name="Hayashi Y."/>
            <person name="Hensch T.K."/>
            <person name="Hirokawa N."/>
            <person name="Hill D."/>
            <person name="Huminiecki L."/>
            <person name="Iacono M."/>
            <person name="Ikeo K."/>
            <person name="Iwama A."/>
            <person name="Ishikawa T."/>
            <person name="Jakt M."/>
            <person name="Kanapin A."/>
            <person name="Katoh M."/>
            <person name="Kawasawa Y."/>
            <person name="Kelso J."/>
            <person name="Kitamura H."/>
            <person name="Kitano H."/>
            <person name="Kollias G."/>
            <person name="Krishnan S.P."/>
            <person name="Kruger A."/>
            <person name="Kummerfeld S.K."/>
            <person name="Kurochkin I.V."/>
            <person name="Lareau L.F."/>
            <person name="Lazarevic D."/>
            <person name="Lipovich L."/>
            <person name="Liu J."/>
            <person name="Liuni S."/>
            <person name="McWilliam S."/>
            <person name="Madan Babu M."/>
            <person name="Madera M."/>
            <person name="Marchionni L."/>
            <person name="Matsuda H."/>
            <person name="Matsuzawa S."/>
            <person name="Miki H."/>
            <person name="Mignone F."/>
            <person name="Miyake S."/>
            <person name="Morris K."/>
            <person name="Mottagui-Tabar S."/>
            <person name="Mulder N."/>
            <person name="Nakano N."/>
            <person name="Nakauchi H."/>
            <person name="Ng P."/>
            <person name="Nilsson R."/>
            <person name="Nishiguchi S."/>
            <person name="Nishikawa S."/>
            <person name="Nori F."/>
            <person name="Ohara O."/>
            <person name="Okazaki Y."/>
            <person name="Orlando V."/>
            <person name="Pang K.C."/>
            <person name="Pavan W.J."/>
            <person name="Pavesi G."/>
            <person name="Pesole G."/>
            <person name="Petrovsky N."/>
            <person name="Piazza S."/>
            <person name="Reed J."/>
            <person name="Reid J.F."/>
            <person name="Ring B.Z."/>
            <person name="Ringwald M."/>
            <person name="Rost B."/>
            <person name="Ruan Y."/>
            <person name="Salzberg S.L."/>
            <person name="Sandelin A."/>
            <person name="Schneider C."/>
            <person name="Schoenbach C."/>
            <person name="Sekiguchi K."/>
            <person name="Semple C.A."/>
            <person name="Seno S."/>
            <person name="Sessa L."/>
            <person name="Sheng Y."/>
            <person name="Shibata Y."/>
            <person name="Shimada H."/>
            <person name="Shimada K."/>
            <person name="Silva D."/>
            <person name="Sinclair B."/>
            <person name="Sperling S."/>
            <person name="Stupka E."/>
            <person name="Sugiura K."/>
            <person name="Sultana R."/>
            <person name="Takenaka Y."/>
            <person name="Taki K."/>
            <person name="Tammoja K."/>
            <person name="Tan S.L."/>
            <person name="Tang S."/>
            <person name="Taylor M.S."/>
            <person name="Tegner J."/>
            <person name="Teichmann S.A."/>
            <person name="Ueda H.R."/>
            <person name="van Nimwegen E."/>
            <person name="Verardo R."/>
            <person name="Wei C.L."/>
            <person name="Yagi K."/>
            <person name="Yamanishi H."/>
            <person name="Zabarovsky E."/>
            <person name="Zhu S."/>
            <person name="Zimmer A."/>
            <person name="Hide W."/>
            <person name="Bult C."/>
            <person name="Grimmond S.M."/>
            <person name="Teasdale R.D."/>
            <person name="Liu E.T."/>
            <person name="Brusic V."/>
            <person name="Quackenbush J."/>
            <person name="Wahlestedt C."/>
            <person name="Mattick J.S."/>
            <person name="Hume D.A."/>
            <person name="Kai C."/>
            <person name="Sasaki D."/>
            <person name="Tomaru Y."/>
            <person name="Fukuda S."/>
            <person name="Kanamori-Katayama M."/>
            <person name="Suzuki M."/>
            <person name="Aoki J."/>
            <person name="Arakawa T."/>
            <person name="Iida J."/>
            <person name="Imamura K."/>
            <person name="Itoh M."/>
            <person name="Kato T."/>
            <person name="Kawaji H."/>
            <person name="Kawagashira N."/>
            <person name="Kawashima T."/>
            <person name="Kojima M."/>
            <person name="Kondo S."/>
            <person name="Konno H."/>
            <person name="Nakano K."/>
            <person name="Ninomiya N."/>
            <person name="Nishio T."/>
            <person name="Okada M."/>
            <person name="Plessy C."/>
            <person name="Shibata K."/>
            <person name="Shiraki T."/>
            <person name="Suzuki S."/>
            <person name="Tagami M."/>
            <person name="Waki K."/>
            <person name="Watahiki A."/>
            <person name="Okamura-Oho Y."/>
            <person name="Suzuki H."/>
            <person name="Kawai J."/>
            <person name="Hayashizaki Y."/>
        </authorList>
    </citation>
    <scope>NUCLEOTIDE SEQUENCE [LARGE SCALE MRNA] (ISOFORM 2)</scope>
    <source>
        <tissue>Lung</tissue>
    </source>
</reference>
<reference key="2">
    <citation type="journal article" date="2004" name="Genome Res.">
        <title>The status, quality, and expansion of the NIH full-length cDNA project: the Mammalian Gene Collection (MGC).</title>
        <authorList>
            <consortium name="The MGC Project Team"/>
        </authorList>
    </citation>
    <scope>NUCLEOTIDE SEQUENCE [LARGE SCALE MRNA] (ISOFORMS 1 AND 3)</scope>
    <source>
        <strain>C57BL/6J</strain>
        <tissue>Brain</tissue>
        <tissue>Eye</tissue>
    </source>
</reference>
<reference key="3">
    <citation type="journal article" date="2009" name="Immunity">
        <title>The phagosomal proteome in interferon-gamma-activated macrophages.</title>
        <authorList>
            <person name="Trost M."/>
            <person name="English L."/>
            <person name="Lemieux S."/>
            <person name="Courcelles M."/>
            <person name="Desjardins M."/>
            <person name="Thibault P."/>
        </authorList>
    </citation>
    <scope>PHOSPHORYLATION [LARGE SCALE ANALYSIS] AT SER-19</scope>
    <scope>IDENTIFICATION BY MASS SPECTROMETRY [LARGE SCALE ANALYSIS]</scope>
</reference>
<dbReference type="EMBL" id="AK144707">
    <property type="protein sequence ID" value="BAE26025.1"/>
    <property type="molecule type" value="mRNA"/>
</dbReference>
<dbReference type="EMBL" id="BC030410">
    <property type="protein sequence ID" value="AAH30410.1"/>
    <property type="molecule type" value="mRNA"/>
</dbReference>
<dbReference type="EMBL" id="BC066011">
    <property type="protein sequence ID" value="AAH66011.1"/>
    <property type="molecule type" value="mRNA"/>
</dbReference>
<dbReference type="CCDS" id="CCDS70672.1">
    <molecule id="Q6NZQ6-1"/>
</dbReference>
<dbReference type="CCDS" id="CCDS79416.1">
    <molecule id="Q6NZQ6-2"/>
</dbReference>
<dbReference type="RefSeq" id="NP_001276620.1">
    <molecule id="Q6NZQ6-2"/>
    <property type="nucleotide sequence ID" value="NM_001289691.1"/>
</dbReference>
<dbReference type="RefSeq" id="NP_001276624.1">
    <molecule id="Q6NZQ6-1"/>
    <property type="nucleotide sequence ID" value="NM_001289695.1"/>
</dbReference>
<dbReference type="RefSeq" id="XP_006521399.1">
    <molecule id="Q6NZQ6-2"/>
    <property type="nucleotide sequence ID" value="XM_006521336.2"/>
</dbReference>
<dbReference type="RefSeq" id="XP_011244021.1">
    <property type="nucleotide sequence ID" value="XM_011245719.1"/>
</dbReference>
<dbReference type="RefSeq" id="XP_017172230.1">
    <property type="nucleotide sequence ID" value="XM_017316741.1"/>
</dbReference>
<dbReference type="SMR" id="Q6NZQ6"/>
<dbReference type="FunCoup" id="Q6NZQ6">
    <property type="interactions" value="1162"/>
</dbReference>
<dbReference type="STRING" id="10090.ENSMUSP00000113770"/>
<dbReference type="iPTMnet" id="Q6NZQ6"/>
<dbReference type="PhosphoSitePlus" id="Q6NZQ6"/>
<dbReference type="jPOST" id="Q6NZQ6"/>
<dbReference type="PaxDb" id="10090-ENSMUSP00000113770"/>
<dbReference type="PeptideAtlas" id="Q6NZQ6"/>
<dbReference type="ProteomicsDB" id="302143">
    <molecule id="Q6NZQ6-1"/>
</dbReference>
<dbReference type="ProteomicsDB" id="302144">
    <molecule id="Q6NZQ6-2"/>
</dbReference>
<dbReference type="ProteomicsDB" id="302145">
    <molecule id="Q6NZQ6-3"/>
</dbReference>
<dbReference type="Pumba" id="Q6NZQ6"/>
<dbReference type="Antibodypedia" id="48331">
    <property type="antibodies" value="55 antibodies from 15 providers"/>
</dbReference>
<dbReference type="DNASU" id="68744"/>
<dbReference type="Ensembl" id="ENSMUST00000118729.8">
    <molecule id="Q6NZQ6-2"/>
    <property type="protein sequence ID" value="ENSMUSP00000112985.2"/>
    <property type="gene ID" value="ENSMUSG00000046897.18"/>
</dbReference>
<dbReference type="Ensembl" id="ENSMUST00000119800.8">
    <molecule id="Q6NZQ6-1"/>
    <property type="protein sequence ID" value="ENSMUSP00000113770.2"/>
    <property type="gene ID" value="ENSMUSG00000046897.18"/>
</dbReference>
<dbReference type="GeneID" id="68744"/>
<dbReference type="KEGG" id="mmu:68744"/>
<dbReference type="UCSC" id="uc007xuw.2">
    <molecule id="Q6NZQ6-2"/>
    <property type="organism name" value="mouse"/>
</dbReference>
<dbReference type="UCSC" id="uc007xuz.2">
    <molecule id="Q6NZQ6-1"/>
    <property type="organism name" value="mouse"/>
</dbReference>
<dbReference type="UCSC" id="uc007xva.2">
    <molecule id="Q6NZQ6-3"/>
    <property type="organism name" value="mouse"/>
</dbReference>
<dbReference type="AGR" id="MGI:1915994"/>
<dbReference type="CTD" id="68744"/>
<dbReference type="MGI" id="MGI:1915994">
    <property type="gene designation" value="Zfp740"/>
</dbReference>
<dbReference type="VEuPathDB" id="HostDB:ENSMUSG00000046897"/>
<dbReference type="eggNOG" id="KOG1721">
    <property type="taxonomic scope" value="Eukaryota"/>
</dbReference>
<dbReference type="GeneTree" id="ENSGT00940000159609"/>
<dbReference type="HOGENOM" id="CLU_093195_0_0_1"/>
<dbReference type="InParanoid" id="Q6NZQ6"/>
<dbReference type="OMA" id="FICQHCF"/>
<dbReference type="PhylomeDB" id="Q6NZQ6"/>
<dbReference type="Reactome" id="R-MMU-212436">
    <property type="pathway name" value="Generic Transcription Pathway"/>
</dbReference>
<dbReference type="BioGRID-ORCS" id="68744">
    <property type="hits" value="3 hits in 77 CRISPR screens"/>
</dbReference>
<dbReference type="ChiTaRS" id="Zfp740">
    <property type="organism name" value="mouse"/>
</dbReference>
<dbReference type="PRO" id="PR:Q6NZQ6"/>
<dbReference type="Proteomes" id="UP000000589">
    <property type="component" value="Chromosome 15"/>
</dbReference>
<dbReference type="RNAct" id="Q6NZQ6">
    <property type="molecule type" value="protein"/>
</dbReference>
<dbReference type="Bgee" id="ENSMUSG00000046897">
    <property type="expression patterns" value="Expressed in ventricular zone and 257 other cell types or tissues"/>
</dbReference>
<dbReference type="ExpressionAtlas" id="Q6NZQ6">
    <property type="expression patterns" value="baseline and differential"/>
</dbReference>
<dbReference type="GO" id="GO:0005634">
    <property type="term" value="C:nucleus"/>
    <property type="evidence" value="ECO:0007669"/>
    <property type="project" value="UniProtKB-SubCell"/>
</dbReference>
<dbReference type="GO" id="GO:1990837">
    <property type="term" value="F:sequence-specific double-stranded DNA binding"/>
    <property type="evidence" value="ECO:0007669"/>
    <property type="project" value="Ensembl"/>
</dbReference>
<dbReference type="GO" id="GO:0008270">
    <property type="term" value="F:zinc ion binding"/>
    <property type="evidence" value="ECO:0007669"/>
    <property type="project" value="UniProtKB-KW"/>
</dbReference>
<dbReference type="FunFam" id="3.30.160.60:FF:000460">
    <property type="entry name" value="Putative zinc finger protein 740"/>
    <property type="match status" value="1"/>
</dbReference>
<dbReference type="FunFam" id="3.30.160.60:FF:000042">
    <property type="entry name" value="Zinc finger protein 148"/>
    <property type="match status" value="1"/>
</dbReference>
<dbReference type="FunFam" id="3.30.160.60:FF:000230">
    <property type="entry name" value="Zinc finger protein 148"/>
    <property type="match status" value="1"/>
</dbReference>
<dbReference type="Gene3D" id="3.30.160.60">
    <property type="entry name" value="Classic Zinc Finger"/>
    <property type="match status" value="3"/>
</dbReference>
<dbReference type="InterPro" id="IPR036236">
    <property type="entry name" value="Znf_C2H2_sf"/>
</dbReference>
<dbReference type="InterPro" id="IPR013087">
    <property type="entry name" value="Znf_C2H2_type"/>
</dbReference>
<dbReference type="PANTHER" id="PTHR24394">
    <property type="entry name" value="ZINC FINGER PROTEIN"/>
    <property type="match status" value="1"/>
</dbReference>
<dbReference type="PANTHER" id="PTHR24394:SF57">
    <property type="entry name" value="ZINC FINGER PROTEIN 740"/>
    <property type="match status" value="1"/>
</dbReference>
<dbReference type="Pfam" id="PF13465">
    <property type="entry name" value="zf-H2C2_2"/>
    <property type="match status" value="1"/>
</dbReference>
<dbReference type="SMART" id="SM00355">
    <property type="entry name" value="ZnF_C2H2"/>
    <property type="match status" value="3"/>
</dbReference>
<dbReference type="SUPFAM" id="SSF57667">
    <property type="entry name" value="beta-beta-alpha zinc fingers"/>
    <property type="match status" value="2"/>
</dbReference>
<dbReference type="PROSITE" id="PS00028">
    <property type="entry name" value="ZINC_FINGER_C2H2_1"/>
    <property type="match status" value="2"/>
</dbReference>
<dbReference type="PROSITE" id="PS50157">
    <property type="entry name" value="ZINC_FINGER_C2H2_2"/>
    <property type="match status" value="3"/>
</dbReference>
<protein>
    <recommendedName>
        <fullName>Zinc finger protein 740</fullName>
    </recommendedName>
</protein>
<sequence>MMLSQIASKQAENGERAGSPDVLRCSSQMDCKPRFDLSSKGHRKDSDKSRNRKEDDSLAEASHSKKTVKKVVVVEQNGSFQVKIPKNFICEHCFGAFRSSYHLKRHVLIHTGEKPFECDVCDMRFIQKYHLERHKRVHSGEKPYQCERCHQCFSRTDRLLRHKRMCQGCQSKTSEGQFSL</sequence>
<proteinExistence type="evidence at protein level"/>
<gene>
    <name type="primary">Znf740</name>
    <name type="synonym">Zfp740</name>
</gene>